<reference key="1">
    <citation type="journal article" date="2005" name="Science">
        <title>Genome streamlining in a cosmopolitan oceanic bacterium.</title>
        <authorList>
            <person name="Giovannoni S.J."/>
            <person name="Tripp H.J."/>
            <person name="Givan S."/>
            <person name="Podar M."/>
            <person name="Vergin K.L."/>
            <person name="Baptista D."/>
            <person name="Bibbs L."/>
            <person name="Eads J."/>
            <person name="Richardson T.H."/>
            <person name="Noordewier M."/>
            <person name="Rappe M.S."/>
            <person name="Short J.M."/>
            <person name="Carrington J.C."/>
            <person name="Mathur E.J."/>
        </authorList>
    </citation>
    <scope>NUCLEOTIDE SEQUENCE [LARGE SCALE GENOMIC DNA]</scope>
    <source>
        <strain>HTCC1062</strain>
    </source>
</reference>
<name>NHAA_PELUB</name>
<feature type="chain" id="PRO_0000334356" description="Na(+)/H(+) antiporter NhaA">
    <location>
        <begin position="1"/>
        <end position="390"/>
    </location>
</feature>
<feature type="transmembrane region" description="Helical" evidence="1">
    <location>
        <begin position="13"/>
        <end position="33"/>
    </location>
</feature>
<feature type="transmembrane region" description="Helical" evidence="1">
    <location>
        <begin position="61"/>
        <end position="81"/>
    </location>
</feature>
<feature type="transmembrane region" description="Helical" evidence="1">
    <location>
        <begin position="99"/>
        <end position="119"/>
    </location>
</feature>
<feature type="transmembrane region" description="Helical" evidence="1">
    <location>
        <begin position="129"/>
        <end position="149"/>
    </location>
</feature>
<feature type="transmembrane region" description="Helical" evidence="1">
    <location>
        <begin position="158"/>
        <end position="178"/>
    </location>
</feature>
<feature type="transmembrane region" description="Helical" evidence="1">
    <location>
        <begin position="181"/>
        <end position="201"/>
    </location>
</feature>
<feature type="transmembrane region" description="Helical" evidence="1">
    <location>
        <begin position="209"/>
        <end position="229"/>
    </location>
</feature>
<feature type="transmembrane region" description="Helical" evidence="1">
    <location>
        <begin position="259"/>
        <end position="279"/>
    </location>
</feature>
<feature type="transmembrane region" description="Helical" evidence="1">
    <location>
        <begin position="297"/>
        <end position="317"/>
    </location>
</feature>
<feature type="transmembrane region" description="Helical" evidence="1">
    <location>
        <begin position="330"/>
        <end position="350"/>
    </location>
</feature>
<feature type="transmembrane region" description="Helical" evidence="1">
    <location>
        <begin position="367"/>
        <end position="387"/>
    </location>
</feature>
<gene>
    <name evidence="1" type="primary">nhaA</name>
    <name type="ordered locus">SAR11_1005</name>
</gene>
<protein>
    <recommendedName>
        <fullName evidence="1">Na(+)/H(+) antiporter NhaA</fullName>
    </recommendedName>
    <alternativeName>
        <fullName evidence="1">Sodium/proton antiporter NhaA</fullName>
    </alternativeName>
</protein>
<organism>
    <name type="scientific">Pelagibacter ubique (strain HTCC1062)</name>
    <dbReference type="NCBI Taxonomy" id="335992"/>
    <lineage>
        <taxon>Bacteria</taxon>
        <taxon>Pseudomonadati</taxon>
        <taxon>Pseudomonadota</taxon>
        <taxon>Alphaproteobacteria</taxon>
        <taxon>Candidatus Pelagibacterales</taxon>
        <taxon>Candidatus Pelagibacteraceae</taxon>
        <taxon>Candidatus Pelagibacter</taxon>
    </lineage>
</organism>
<evidence type="ECO:0000255" key="1">
    <source>
        <dbReference type="HAMAP-Rule" id="MF_01844"/>
    </source>
</evidence>
<evidence type="ECO:0000305" key="2"/>
<dbReference type="EMBL" id="CP000084">
    <property type="protein sequence ID" value="AAZ21812.1"/>
    <property type="status" value="ALT_INIT"/>
    <property type="molecule type" value="Genomic_DNA"/>
</dbReference>
<dbReference type="RefSeq" id="WP_006996915.1">
    <property type="nucleotide sequence ID" value="NC_007205.1"/>
</dbReference>
<dbReference type="SMR" id="Q4FLX6"/>
<dbReference type="STRING" id="335992.SAR11_1005"/>
<dbReference type="GeneID" id="66295495"/>
<dbReference type="KEGG" id="pub:SAR11_1005"/>
<dbReference type="eggNOG" id="COG3004">
    <property type="taxonomic scope" value="Bacteria"/>
</dbReference>
<dbReference type="HOGENOM" id="CLU_015803_1_0_5"/>
<dbReference type="OrthoDB" id="9808135at2"/>
<dbReference type="Proteomes" id="UP000002528">
    <property type="component" value="Chromosome"/>
</dbReference>
<dbReference type="GO" id="GO:0005886">
    <property type="term" value="C:plasma membrane"/>
    <property type="evidence" value="ECO:0007669"/>
    <property type="project" value="UniProtKB-SubCell"/>
</dbReference>
<dbReference type="GO" id="GO:0015385">
    <property type="term" value="F:sodium:proton antiporter activity"/>
    <property type="evidence" value="ECO:0007669"/>
    <property type="project" value="TreeGrafter"/>
</dbReference>
<dbReference type="GO" id="GO:0006885">
    <property type="term" value="P:regulation of pH"/>
    <property type="evidence" value="ECO:0007669"/>
    <property type="project" value="InterPro"/>
</dbReference>
<dbReference type="Gene3D" id="1.20.1530.10">
    <property type="entry name" value="Na+/H+ antiporter like domain"/>
    <property type="match status" value="1"/>
</dbReference>
<dbReference type="HAMAP" id="MF_01844">
    <property type="entry name" value="NhaA"/>
    <property type="match status" value="1"/>
</dbReference>
<dbReference type="InterPro" id="IPR023171">
    <property type="entry name" value="Na/H_antiporter_dom_sf"/>
</dbReference>
<dbReference type="InterPro" id="IPR004670">
    <property type="entry name" value="NhaA"/>
</dbReference>
<dbReference type="NCBIfam" id="TIGR00773">
    <property type="entry name" value="NhaA"/>
    <property type="match status" value="1"/>
</dbReference>
<dbReference type="NCBIfam" id="NF007111">
    <property type="entry name" value="PRK09560.1"/>
    <property type="match status" value="1"/>
</dbReference>
<dbReference type="NCBIfam" id="NF007112">
    <property type="entry name" value="PRK09561.1"/>
    <property type="match status" value="1"/>
</dbReference>
<dbReference type="PANTHER" id="PTHR30341:SF0">
    <property type="entry name" value="NA(+)_H(+) ANTIPORTER NHAA"/>
    <property type="match status" value="1"/>
</dbReference>
<dbReference type="PANTHER" id="PTHR30341">
    <property type="entry name" value="SODIUM ION/PROTON ANTIPORTER NHAA-RELATED"/>
    <property type="match status" value="1"/>
</dbReference>
<dbReference type="Pfam" id="PF06965">
    <property type="entry name" value="Na_H_antiport_1"/>
    <property type="match status" value="1"/>
</dbReference>
<sequence>MIKNLSKPFKWFFQLEAASGLVLLIAAIIALVISNSSLSNLYFDTLNQYLFIGINDFGLKLSVHHWINDLLMAIFFFFVTLEIKREFIQGELSNLKKALLPIIGAVGGMVVPALVYVFINLGNSETLNGWAIPSATDIAFSLGILSLLGSRVPISLKVFLTALAIIDDLGAILIIAFFYSGDLSISYLSLILISYILLLTLNKFGVKKFIPYLIIGAFMWFFTYKSGIHATIAGVLLASTIPHRIKEKDFSLLIKLEHAISPYVAFIIMPIFAFANAGVSLEGLSLTSLLEPVPLGILLGLFVGKQVGVMVVSFIAVKFGVAQMPDKSSWLSLYGVSILTGVGFTMSLFVGNLAFAENIQYIDGVKIGVLAGSLLSTVFGYFILLYASKK</sequence>
<comment type="function">
    <text evidence="1">Na(+)/H(+) antiporter that extrudes sodium in exchange for external protons.</text>
</comment>
<comment type="catalytic activity">
    <reaction evidence="1">
        <text>Na(+)(in) + 2 H(+)(out) = Na(+)(out) + 2 H(+)(in)</text>
        <dbReference type="Rhea" id="RHEA:29251"/>
        <dbReference type="ChEBI" id="CHEBI:15378"/>
        <dbReference type="ChEBI" id="CHEBI:29101"/>
    </reaction>
    <physiologicalReaction direction="left-to-right" evidence="1">
        <dbReference type="Rhea" id="RHEA:29252"/>
    </physiologicalReaction>
</comment>
<comment type="subcellular location">
    <subcellularLocation>
        <location evidence="1">Cell inner membrane</location>
        <topology evidence="1">Multi-pass membrane protein</topology>
    </subcellularLocation>
</comment>
<comment type="similarity">
    <text evidence="1">Belongs to the NhaA Na(+)/H(+) (TC 2.A.33) antiporter family.</text>
</comment>
<comment type="sequence caution" evidence="2">
    <conflict type="erroneous initiation">
        <sequence resource="EMBL-CDS" id="AAZ21812"/>
    </conflict>
</comment>
<keyword id="KW-0050">Antiport</keyword>
<keyword id="KW-0997">Cell inner membrane</keyword>
<keyword id="KW-1003">Cell membrane</keyword>
<keyword id="KW-0406">Ion transport</keyword>
<keyword id="KW-0472">Membrane</keyword>
<keyword id="KW-1185">Reference proteome</keyword>
<keyword id="KW-0915">Sodium</keyword>
<keyword id="KW-0739">Sodium transport</keyword>
<keyword id="KW-0812">Transmembrane</keyword>
<keyword id="KW-1133">Transmembrane helix</keyword>
<keyword id="KW-0813">Transport</keyword>
<proteinExistence type="inferred from homology"/>
<accession>Q4FLX6</accession>